<feature type="chain" id="PRO_0000212017" description="Protein-arginine kinase">
    <location>
        <begin position="1"/>
        <end position="363"/>
    </location>
</feature>
<feature type="domain" description="Phosphagen kinase C-terminal" evidence="1">
    <location>
        <begin position="24"/>
        <end position="254"/>
    </location>
</feature>
<feature type="short sequence motif" description="RDXXRA motif of the pArg binding pocket involved in allosteric regulation" evidence="1">
    <location>
        <begin position="337"/>
        <end position="342"/>
    </location>
</feature>
<feature type="binding site" evidence="1">
    <location>
        <begin position="27"/>
        <end position="31"/>
    </location>
    <ligand>
        <name>ATP</name>
        <dbReference type="ChEBI" id="CHEBI:30616"/>
    </ligand>
</feature>
<feature type="binding site" evidence="1">
    <location>
        <position position="92"/>
    </location>
    <ligand>
        <name>ATP</name>
        <dbReference type="ChEBI" id="CHEBI:30616"/>
    </ligand>
</feature>
<feature type="binding site" evidence="1">
    <location>
        <position position="125"/>
    </location>
    <ligand>
        <name>ATP</name>
        <dbReference type="ChEBI" id="CHEBI:30616"/>
    </ligand>
</feature>
<feature type="binding site" evidence="1">
    <location>
        <begin position="176"/>
        <end position="180"/>
    </location>
    <ligand>
        <name>ATP</name>
        <dbReference type="ChEBI" id="CHEBI:30616"/>
    </ligand>
</feature>
<feature type="binding site" evidence="1">
    <location>
        <begin position="207"/>
        <end position="212"/>
    </location>
    <ligand>
        <name>ATP</name>
        <dbReference type="ChEBI" id="CHEBI:30616"/>
    </ligand>
</feature>
<feature type="modified residue" description="Phosphoarginine; by autocatalysis" evidence="4">
    <location>
        <position position="29"/>
    </location>
</feature>
<feature type="modified residue" description="Phosphoarginine; by autocatalysis" evidence="6">
    <location>
        <position position="40"/>
    </location>
</feature>
<feature type="modified residue" description="Phosphoarginine; by autocatalysis" evidence="6">
    <location>
        <position position="86"/>
    </location>
</feature>
<feature type="modified residue" description="Phosphoarginine; by autocatalysis" evidence="4">
    <location>
        <position position="190"/>
    </location>
</feature>
<feature type="modified residue" description="Phosphoarginine; by autocatalysis" evidence="4 6">
    <location>
        <position position="255"/>
    </location>
</feature>
<feature type="modified residue" description="Phosphoarginine; by autocatalysis" evidence="4">
    <location>
        <position position="269"/>
    </location>
</feature>
<feature type="modified residue" description="Phosphoarginine; by autocatalysis" evidence="4">
    <location>
        <position position="272"/>
    </location>
</feature>
<feature type="modified residue" description="Phosphoarginine; by autocatalysis" evidence="6">
    <location>
        <position position="346"/>
    </location>
</feature>
<feature type="mutagenesis site" description="Stabilizes quantity of CtsR to an extent comparable to that observed for the mcsB deletion, indicating a loss of protein phosphorylation activity of McsB in vivo." evidence="7">
    <original>E</original>
    <variation>A</variation>
    <location>
        <position position="121"/>
    </location>
</feature>
<feature type="mutagenesis site" description="Stabilizes quantity of CtsR to an extent a little lower to that observed for the mcsB deletion, indicating a decrease of protein phosphorylation activity of McsB in vivo." evidence="7">
    <original>Y</original>
    <variation>A</variation>
    <location>
        <position position="210"/>
    </location>
</feature>
<feature type="mutagenesis site" description="Stabilizes quantity of CtsR to an extent a little lower to that observed for the mcsB deletion, indicating a decrease of protein phosphorylation activity of McsB in vivo." evidence="7">
    <original>R</original>
    <variation>A</variation>
    <location>
        <position position="272"/>
    </location>
</feature>
<feature type="helix" evidence="11">
    <location>
        <begin position="1"/>
        <end position="8"/>
    </location>
</feature>
<feature type="helix" evidence="11">
    <location>
        <begin position="13"/>
        <end position="16"/>
    </location>
</feature>
<feature type="turn" evidence="11">
    <location>
        <begin position="20"/>
        <end position="24"/>
    </location>
</feature>
<feature type="strand" evidence="11">
    <location>
        <begin position="25"/>
        <end position="34"/>
    </location>
</feature>
<feature type="strand" evidence="12">
    <location>
        <begin position="36"/>
        <end position="39"/>
    </location>
</feature>
<feature type="turn" evidence="11">
    <location>
        <begin position="42"/>
        <end position="44"/>
    </location>
</feature>
<feature type="helix" evidence="11">
    <location>
        <begin position="47"/>
        <end position="60"/>
    </location>
</feature>
<feature type="turn" evidence="11">
    <location>
        <begin position="61"/>
        <end position="63"/>
    </location>
</feature>
<feature type="turn" evidence="11">
    <location>
        <begin position="67"/>
        <end position="69"/>
    </location>
</feature>
<feature type="strand" evidence="11">
    <location>
        <begin position="70"/>
        <end position="76"/>
    </location>
</feature>
<feature type="helix" evidence="11">
    <location>
        <begin position="77"/>
        <end position="79"/>
    </location>
</feature>
<feature type="helix" evidence="11">
    <location>
        <begin position="82"/>
        <end position="90"/>
    </location>
</feature>
<feature type="helix" evidence="11">
    <location>
        <begin position="96"/>
        <end position="100"/>
    </location>
</feature>
<feature type="strand" evidence="11">
    <location>
        <begin position="105"/>
        <end position="109"/>
    </location>
</feature>
<feature type="strand" evidence="11">
    <location>
        <begin position="112"/>
        <end position="133"/>
    </location>
</feature>
<feature type="helix" evidence="11">
    <location>
        <begin position="135"/>
        <end position="150"/>
    </location>
</feature>
<feature type="turn" evidence="11">
    <location>
        <begin position="159"/>
        <end position="161"/>
    </location>
</feature>
<feature type="turn" evidence="11">
    <location>
        <begin position="168"/>
        <end position="171"/>
    </location>
</feature>
<feature type="strand" evidence="11">
    <location>
        <begin position="175"/>
        <end position="182"/>
    </location>
</feature>
<feature type="helix" evidence="11">
    <location>
        <begin position="184"/>
        <end position="188"/>
    </location>
</feature>
<feature type="turn" evidence="12">
    <location>
        <begin position="189"/>
        <end position="191"/>
    </location>
</feature>
<feature type="helix" evidence="11">
    <location>
        <begin position="196"/>
        <end position="201"/>
    </location>
</feature>
<feature type="strand" evidence="11">
    <location>
        <begin position="204"/>
        <end position="207"/>
    </location>
</feature>
<feature type="helix" evidence="11">
    <location>
        <begin position="217"/>
        <end position="219"/>
    </location>
</feature>
<feature type="strand" evidence="11">
    <location>
        <begin position="220"/>
        <end position="225"/>
    </location>
</feature>
<feature type="strand" evidence="12">
    <location>
        <begin position="228"/>
        <end position="231"/>
    </location>
</feature>
<feature type="helix" evidence="11">
    <location>
        <begin position="233"/>
        <end position="261"/>
    </location>
</feature>
<feature type="helix" evidence="11">
    <location>
        <begin position="263"/>
        <end position="279"/>
    </location>
</feature>
<feature type="helix" evidence="11">
    <location>
        <begin position="285"/>
        <end position="300"/>
    </location>
</feature>
<feature type="helix" evidence="11">
    <location>
        <begin position="309"/>
        <end position="318"/>
    </location>
</feature>
<feature type="helix" evidence="11">
    <location>
        <begin position="321"/>
        <end position="328"/>
    </location>
</feature>
<feature type="helix" evidence="11">
    <location>
        <begin position="334"/>
        <end position="362"/>
    </location>
</feature>
<protein>
    <recommendedName>
        <fullName evidence="1">Protein-arginine kinase</fullName>
        <ecNumber evidence="1 10">2.7.14.1</ecNumber>
    </recommendedName>
</protein>
<dbReference type="EC" id="2.7.14.1" evidence="1 10"/>
<dbReference type="EMBL" id="D26185">
    <property type="protein sequence ID" value="BAA05319.1"/>
    <property type="molecule type" value="Genomic_DNA"/>
</dbReference>
<dbReference type="EMBL" id="AL009126">
    <property type="protein sequence ID" value="CAB11861.1"/>
    <property type="molecule type" value="Genomic_DNA"/>
</dbReference>
<dbReference type="EMBL" id="U02604">
    <property type="protein sequence ID" value="AAA19232.1"/>
    <property type="molecule type" value="Unassigned_DNA"/>
</dbReference>
<dbReference type="PIR" id="S66114">
    <property type="entry name" value="S66114"/>
</dbReference>
<dbReference type="RefSeq" id="NP_387966.1">
    <property type="nucleotide sequence ID" value="NC_000964.3"/>
</dbReference>
<dbReference type="RefSeq" id="WP_003235007.1">
    <property type="nucleotide sequence ID" value="NZ_OZ025638.1"/>
</dbReference>
<dbReference type="PDB" id="6TV6">
    <property type="method" value="X-ray"/>
    <property type="resolution" value="2.50 A"/>
    <property type="chains" value="A/B/C/D=1-363"/>
</dbReference>
<dbReference type="PDB" id="8WTB">
    <property type="method" value="X-ray"/>
    <property type="resolution" value="2.90 A"/>
    <property type="chains" value="A/C=1-363"/>
</dbReference>
<dbReference type="PDB" id="8WTC">
    <property type="method" value="X-ray"/>
    <property type="resolution" value="2.80 A"/>
    <property type="chains" value="A/C=18-258"/>
</dbReference>
<dbReference type="PDBsum" id="6TV6"/>
<dbReference type="PDBsum" id="8WTB"/>
<dbReference type="PDBsum" id="8WTC"/>
<dbReference type="SMR" id="P37570"/>
<dbReference type="FunCoup" id="P37570">
    <property type="interactions" value="35"/>
</dbReference>
<dbReference type="IntAct" id="P37570">
    <property type="interactions" value="1"/>
</dbReference>
<dbReference type="MINT" id="P37570"/>
<dbReference type="STRING" id="224308.BSU00850"/>
<dbReference type="iPTMnet" id="P37570"/>
<dbReference type="jPOST" id="P37570"/>
<dbReference type="PaxDb" id="224308-BSU00850"/>
<dbReference type="EnsemblBacteria" id="CAB11861">
    <property type="protein sequence ID" value="CAB11861"/>
    <property type="gene ID" value="BSU_00850"/>
</dbReference>
<dbReference type="GeneID" id="936939"/>
<dbReference type="KEGG" id="bsu:BSU00850"/>
<dbReference type="PATRIC" id="fig|224308.179.peg.86"/>
<dbReference type="eggNOG" id="COG3869">
    <property type="taxonomic scope" value="Bacteria"/>
</dbReference>
<dbReference type="InParanoid" id="P37570"/>
<dbReference type="OrthoDB" id="9791353at2"/>
<dbReference type="PhylomeDB" id="P37570"/>
<dbReference type="BioCyc" id="BSUB:BSU00850-MONOMER"/>
<dbReference type="BRENDA" id="2.7.14.1">
    <property type="organism ID" value="658"/>
</dbReference>
<dbReference type="Proteomes" id="UP000001570">
    <property type="component" value="Chromosome"/>
</dbReference>
<dbReference type="GO" id="GO:0005737">
    <property type="term" value="C:cytoplasm"/>
    <property type="evidence" value="ECO:0007669"/>
    <property type="project" value="UniProtKB-SubCell"/>
</dbReference>
<dbReference type="GO" id="GO:0005615">
    <property type="term" value="C:extracellular space"/>
    <property type="evidence" value="ECO:0000318"/>
    <property type="project" value="GO_Central"/>
</dbReference>
<dbReference type="GO" id="GO:0005524">
    <property type="term" value="F:ATP binding"/>
    <property type="evidence" value="ECO:0007669"/>
    <property type="project" value="UniProtKB-KW"/>
</dbReference>
<dbReference type="GO" id="GO:0004111">
    <property type="term" value="F:creatine kinase activity"/>
    <property type="evidence" value="ECO:0007669"/>
    <property type="project" value="InterPro"/>
</dbReference>
<dbReference type="GO" id="GO:0016301">
    <property type="term" value="F:kinase activity"/>
    <property type="evidence" value="ECO:0000318"/>
    <property type="project" value="GO_Central"/>
</dbReference>
<dbReference type="GO" id="GO:0004672">
    <property type="term" value="F:protein kinase activity"/>
    <property type="evidence" value="ECO:0007669"/>
    <property type="project" value="UniProtKB-UniRule"/>
</dbReference>
<dbReference type="GO" id="GO:0046314">
    <property type="term" value="P:phosphocreatine biosynthetic process"/>
    <property type="evidence" value="ECO:0007669"/>
    <property type="project" value="InterPro"/>
</dbReference>
<dbReference type="CDD" id="cd07930">
    <property type="entry name" value="bacterial_phosphagen_kinase"/>
    <property type="match status" value="1"/>
</dbReference>
<dbReference type="FunFam" id="3.30.590.10:FF:000007">
    <property type="entry name" value="Protein-arginine kinase"/>
    <property type="match status" value="1"/>
</dbReference>
<dbReference type="Gene3D" id="3.30.590.10">
    <property type="entry name" value="Glutamine synthetase/guanido kinase, catalytic domain"/>
    <property type="match status" value="1"/>
</dbReference>
<dbReference type="HAMAP" id="MF_00602">
    <property type="entry name" value="Prot_Arg_kinase"/>
    <property type="match status" value="1"/>
</dbReference>
<dbReference type="InterPro" id="IPR023660">
    <property type="entry name" value="Arg_Kinase"/>
</dbReference>
<dbReference type="InterPro" id="IPR000749">
    <property type="entry name" value="ATP-guanido_PTrfase"/>
</dbReference>
<dbReference type="InterPro" id="IPR022415">
    <property type="entry name" value="ATP-guanido_PTrfase_AS"/>
</dbReference>
<dbReference type="InterPro" id="IPR022414">
    <property type="entry name" value="ATP-guanido_PTrfase_cat"/>
</dbReference>
<dbReference type="InterPro" id="IPR014746">
    <property type="entry name" value="Gln_synth/guanido_kin_cat_dom"/>
</dbReference>
<dbReference type="NCBIfam" id="NF002194">
    <property type="entry name" value="PRK01059.1-4"/>
    <property type="match status" value="1"/>
</dbReference>
<dbReference type="NCBIfam" id="NF002195">
    <property type="entry name" value="PRK01059.1-5"/>
    <property type="match status" value="1"/>
</dbReference>
<dbReference type="PANTHER" id="PTHR11547:SF38">
    <property type="entry name" value="ARGININE KINASE 1-RELATED"/>
    <property type="match status" value="1"/>
</dbReference>
<dbReference type="PANTHER" id="PTHR11547">
    <property type="entry name" value="ARGININE OR CREATINE KINASE"/>
    <property type="match status" value="1"/>
</dbReference>
<dbReference type="Pfam" id="PF00217">
    <property type="entry name" value="ATP-gua_Ptrans"/>
    <property type="match status" value="1"/>
</dbReference>
<dbReference type="SUPFAM" id="SSF55931">
    <property type="entry name" value="Glutamine synthetase/guanido kinase"/>
    <property type="match status" value="1"/>
</dbReference>
<dbReference type="PROSITE" id="PS00112">
    <property type="entry name" value="PHOSPHAGEN_KINASE"/>
    <property type="match status" value="1"/>
</dbReference>
<dbReference type="PROSITE" id="PS51510">
    <property type="entry name" value="PHOSPHAGEN_KINASE_C"/>
    <property type="match status" value="1"/>
</dbReference>
<organism>
    <name type="scientific">Bacillus subtilis (strain 168)</name>
    <dbReference type="NCBI Taxonomy" id="224308"/>
    <lineage>
        <taxon>Bacteria</taxon>
        <taxon>Bacillati</taxon>
        <taxon>Bacillota</taxon>
        <taxon>Bacilli</taxon>
        <taxon>Bacillales</taxon>
        <taxon>Bacillaceae</taxon>
        <taxon>Bacillus</taxon>
    </lineage>
</organism>
<reference key="1">
    <citation type="journal article" date="1994" name="DNA Res.">
        <title>Systematic sequencing of the 180 kilobase region of the Bacillus subtilis chromosome containing the replication origin.</title>
        <authorList>
            <person name="Ogasawara N."/>
            <person name="Nakai S."/>
            <person name="Yoshikawa H."/>
        </authorList>
    </citation>
    <scope>NUCLEOTIDE SEQUENCE [GENOMIC DNA]</scope>
    <source>
        <strain>168</strain>
    </source>
</reference>
<reference key="2">
    <citation type="journal article" date="1997" name="Nature">
        <title>The complete genome sequence of the Gram-positive bacterium Bacillus subtilis.</title>
        <authorList>
            <person name="Kunst F."/>
            <person name="Ogasawara N."/>
            <person name="Moszer I."/>
            <person name="Albertini A.M."/>
            <person name="Alloni G."/>
            <person name="Azevedo V."/>
            <person name="Bertero M.G."/>
            <person name="Bessieres P."/>
            <person name="Bolotin A."/>
            <person name="Borchert S."/>
            <person name="Borriss R."/>
            <person name="Boursier L."/>
            <person name="Brans A."/>
            <person name="Braun M."/>
            <person name="Brignell S.C."/>
            <person name="Bron S."/>
            <person name="Brouillet S."/>
            <person name="Bruschi C.V."/>
            <person name="Caldwell B."/>
            <person name="Capuano V."/>
            <person name="Carter N.M."/>
            <person name="Choi S.-K."/>
            <person name="Codani J.-J."/>
            <person name="Connerton I.F."/>
            <person name="Cummings N.J."/>
            <person name="Daniel R.A."/>
            <person name="Denizot F."/>
            <person name="Devine K.M."/>
            <person name="Duesterhoeft A."/>
            <person name="Ehrlich S.D."/>
            <person name="Emmerson P.T."/>
            <person name="Entian K.-D."/>
            <person name="Errington J."/>
            <person name="Fabret C."/>
            <person name="Ferrari E."/>
            <person name="Foulger D."/>
            <person name="Fritz C."/>
            <person name="Fujita M."/>
            <person name="Fujita Y."/>
            <person name="Fuma S."/>
            <person name="Galizzi A."/>
            <person name="Galleron N."/>
            <person name="Ghim S.-Y."/>
            <person name="Glaser P."/>
            <person name="Goffeau A."/>
            <person name="Golightly E.J."/>
            <person name="Grandi G."/>
            <person name="Guiseppi G."/>
            <person name="Guy B.J."/>
            <person name="Haga K."/>
            <person name="Haiech J."/>
            <person name="Harwood C.R."/>
            <person name="Henaut A."/>
            <person name="Hilbert H."/>
            <person name="Holsappel S."/>
            <person name="Hosono S."/>
            <person name="Hullo M.-F."/>
            <person name="Itaya M."/>
            <person name="Jones L.-M."/>
            <person name="Joris B."/>
            <person name="Karamata D."/>
            <person name="Kasahara Y."/>
            <person name="Klaerr-Blanchard M."/>
            <person name="Klein C."/>
            <person name="Kobayashi Y."/>
            <person name="Koetter P."/>
            <person name="Koningstein G."/>
            <person name="Krogh S."/>
            <person name="Kumano M."/>
            <person name="Kurita K."/>
            <person name="Lapidus A."/>
            <person name="Lardinois S."/>
            <person name="Lauber J."/>
            <person name="Lazarevic V."/>
            <person name="Lee S.-M."/>
            <person name="Levine A."/>
            <person name="Liu H."/>
            <person name="Masuda S."/>
            <person name="Mauel C."/>
            <person name="Medigue C."/>
            <person name="Medina N."/>
            <person name="Mellado R.P."/>
            <person name="Mizuno M."/>
            <person name="Moestl D."/>
            <person name="Nakai S."/>
            <person name="Noback M."/>
            <person name="Noone D."/>
            <person name="O'Reilly M."/>
            <person name="Ogawa K."/>
            <person name="Ogiwara A."/>
            <person name="Oudega B."/>
            <person name="Park S.-H."/>
            <person name="Parro V."/>
            <person name="Pohl T.M."/>
            <person name="Portetelle D."/>
            <person name="Porwollik S."/>
            <person name="Prescott A.M."/>
            <person name="Presecan E."/>
            <person name="Pujic P."/>
            <person name="Purnelle B."/>
            <person name="Rapoport G."/>
            <person name="Rey M."/>
            <person name="Reynolds S."/>
            <person name="Rieger M."/>
            <person name="Rivolta C."/>
            <person name="Rocha E."/>
            <person name="Roche B."/>
            <person name="Rose M."/>
            <person name="Sadaie Y."/>
            <person name="Sato T."/>
            <person name="Scanlan E."/>
            <person name="Schleich S."/>
            <person name="Schroeter R."/>
            <person name="Scoffone F."/>
            <person name="Sekiguchi J."/>
            <person name="Sekowska A."/>
            <person name="Seror S.J."/>
            <person name="Serror P."/>
            <person name="Shin B.-S."/>
            <person name="Soldo B."/>
            <person name="Sorokin A."/>
            <person name="Tacconi E."/>
            <person name="Takagi T."/>
            <person name="Takahashi H."/>
            <person name="Takemaru K."/>
            <person name="Takeuchi M."/>
            <person name="Tamakoshi A."/>
            <person name="Tanaka T."/>
            <person name="Terpstra P."/>
            <person name="Tognoni A."/>
            <person name="Tosato V."/>
            <person name="Uchiyama S."/>
            <person name="Vandenbol M."/>
            <person name="Vannier F."/>
            <person name="Vassarotti A."/>
            <person name="Viari A."/>
            <person name="Wambutt R."/>
            <person name="Wedler E."/>
            <person name="Wedler H."/>
            <person name="Weitzenegger T."/>
            <person name="Winters P."/>
            <person name="Wipat A."/>
            <person name="Yamamoto H."/>
            <person name="Yamane K."/>
            <person name="Yasumoto K."/>
            <person name="Yata K."/>
            <person name="Yoshida K."/>
            <person name="Yoshikawa H.-F."/>
            <person name="Zumstein E."/>
            <person name="Yoshikawa H."/>
            <person name="Danchin A."/>
        </authorList>
    </citation>
    <scope>NUCLEOTIDE SEQUENCE [LARGE SCALE GENOMIC DNA]</scope>
    <source>
        <strain>168</strain>
    </source>
</reference>
<reference key="3">
    <citation type="journal article" date="1994" name="Proc. Natl. Acad. Sci. U.S.A.">
        <title>MecB of Bacillus subtilis, a member of the ClpC ATPase family, is a pleiotropic regulator controlling competence gene expression and growth at high temperature.</title>
        <authorList>
            <person name="Msadek T."/>
            <person name="Kunst F."/>
            <person name="Rapoport G."/>
        </authorList>
    </citation>
    <scope>NUCLEOTIDE SEQUENCE [GENOMIC DNA] OF 253-363</scope>
    <source>
        <strain>168 / Marburg / ATCC 6051 / DSM 10 / JCM 1465 / NBRC 13719 / NCIMB 3610 / NRRL NRS-744 / VKM B-501</strain>
    </source>
</reference>
<reference key="4">
    <citation type="journal article" date="1999" name="Mol. Microbiol.">
        <title>CtsR, a novel regulator of stress and heat shock response, controls clp and molecular chaperone gene expression in gram-positive bacteria.</title>
        <authorList>
            <person name="Derre I."/>
            <person name="Rapoport G."/>
            <person name="Msadek T."/>
        </authorList>
    </citation>
    <scope>REPRESSION BY CTSR</scope>
</reference>
<reference key="5">
    <citation type="journal article" date="2001" name="EMBO J.">
        <title>Clp-mediated proteolysis in Gram-positive bacteria is autoregulated by the stability of a repressor.</title>
        <authorList>
            <person name="Kruger E."/>
            <person name="Zuhlke D."/>
            <person name="Witt E."/>
            <person name="Ludwig H."/>
            <person name="Hecker M."/>
        </authorList>
    </citation>
    <scope>GENE NAME</scope>
    <source>
        <strain>168 / IS58</strain>
    </source>
</reference>
<reference key="6">
    <citation type="journal article" date="2005" name="EMBO J.">
        <title>A tyrosine kinase and its activator control the activity of the CtsR heat shock repressor in B. subtilis.</title>
        <authorList>
            <person name="Kirstein J."/>
            <person name="Zuhlke D."/>
            <person name="Gerth U."/>
            <person name="Turgay K."/>
            <person name="Hecker M."/>
        </authorList>
    </citation>
    <scope>ACTIVITY REGULATION</scope>
    <scope>INTERACTION WITH MCSA AND CTSR</scope>
    <source>
        <strain>168</strain>
    </source>
</reference>
<reference key="7">
    <citation type="journal article" date="2009" name="Mol. Microbiol.">
        <title>McsA and B mediate the delocalization of competence proteins from the cell poles of Bacillus subtilis.</title>
        <authorList>
            <person name="Hahn J."/>
            <person name="Kramer N."/>
            <person name="Briley K. Jr."/>
            <person name="Dubnau D."/>
        </authorList>
    </citation>
    <scope>FUNCTION</scope>
    <scope>DISRUPTION PHENOTYPE</scope>
    <scope>SUBCELLULAR LOCATION</scope>
    <source>
        <strain>168 / BD630</strain>
    </source>
</reference>
<reference key="8">
    <citation type="journal article" date="2011" name="J. Bacteriol.">
        <title>Activity control of the ClpC adaptor McsB in Bacillus subtilis.</title>
        <authorList>
            <person name="Elsholz A.K."/>
            <person name="Hempel K."/>
            <person name="Michalik S."/>
            <person name="Gronau K."/>
            <person name="Becher D."/>
            <person name="Hecker M."/>
            <person name="Gerth U."/>
        </authorList>
    </citation>
    <scope>FUNCTION</scope>
    <scope>ACTIVITY REGULATION</scope>
    <scope>INTERACTION WITH CLPC AND MCSA</scope>
    <scope>PHOSPHORYLATION AT ARG-29; ARG-190; ARG-255; ARG-269 AND ARG-272</scope>
    <source>
        <strain>168</strain>
    </source>
</reference>
<reference key="9">
    <citation type="journal article" date="2012" name="Proc. Natl. Acad. Sci. U.S.A.">
        <title>Global impact of protein arginine phosphorylation on the physiology of Bacillus subtilis.</title>
        <authorList>
            <person name="Elsholz A.K."/>
            <person name="Turgay K."/>
            <person name="Michalik S."/>
            <person name="Hessling B."/>
            <person name="Gronau K."/>
            <person name="Oertel D."/>
            <person name="Mader U."/>
            <person name="Bernhardt J."/>
            <person name="Becher D."/>
            <person name="Hecker M."/>
            <person name="Gerth U."/>
        </authorList>
    </citation>
    <scope>FUNCTION AS AN ARGININE KINASE</scope>
    <scope>IDENTIFICATION OF SUBSTRATES</scope>
    <scope>ACTIVITY REGULATION</scope>
    <source>
        <strain>168</strain>
    </source>
</reference>
<reference key="10">
    <citation type="journal article" date="2014" name="Mol. Cell. Proteomics">
        <title>Quantitative phosphoproteomics reveals the role of protein arginine phosphorylation in the bacterial stress response.</title>
        <authorList>
            <person name="Schmidt A."/>
            <person name="Trentini D.B."/>
            <person name="Spiess S."/>
            <person name="Fuhrmann J."/>
            <person name="Ammerer G."/>
            <person name="Mechtler K."/>
            <person name="Clausen T."/>
        </authorList>
    </citation>
    <scope>FUNCTION</scope>
    <scope>IDENTIFICATION OF SUBSTRATES</scope>
    <scope>ACTIVITY REGULATION</scope>
    <scope>PHOSPHORYLATION AT ARG-40; ARG-86; ARG-255 AND ARG-346</scope>
    <source>
        <strain>168</strain>
    </source>
</reference>
<reference key="11">
    <citation type="journal article" date="2019" name="Nat. Chem. Biol.">
        <title>Structure of McsB, a protein kinase for regulated arginine phosphorylation.</title>
        <authorList>
            <person name="Suskiewicz M.J."/>
            <person name="Hajdusits B."/>
            <person name="Beveridge R."/>
            <person name="Heuck A."/>
            <person name="Vu L.D."/>
            <person name="Kurzbauer R."/>
            <person name="Hauer K."/>
            <person name="Thoeny V."/>
            <person name="Rumpel K."/>
            <person name="Mechtler K."/>
            <person name="Meinhart A."/>
            <person name="Clausen T."/>
        </authorList>
    </citation>
    <scope>FUNCTION</scope>
    <scope>DISRUPTION PHENOTYPE</scope>
    <scope>MUTAGENESIS OF GLU-121; TYR-210 AND ARG-272</scope>
    <source>
        <strain>168</strain>
    </source>
</reference>
<proteinExistence type="evidence at protein level"/>
<accession>P37570</accession>
<gene>
    <name evidence="1" type="primary">mcsB</name>
    <name type="synonym">yacI</name>
    <name type="ordered locus">BSU00850</name>
</gene>
<sequence>MSLKHFIQDALSSWMKQKGPESDIVLSSRIRLARNFEHIRFPTRYSNEEASSIIQQFEDQFSEQEIPGIGKFVLIRMNDAQPLEKRVLVEKHLISPNLTESPFGGCLLSENEEVSVMLNEEDHIRIQCLFPGFQLLEAMKAANQVDDWIEEKVDYAFNEQRGYLTSCPTNVGTGLRASVMMHLPALVLTRQINRIIPAINQLGLVVRGIYGEGSEAVGNIFQISNQITLGKSEQDIVEDLNSVAAQLIEQERSAREAIYQTSKIELEDRVYRSYGVLSNCRMIESKETAKCLSDVRLGIDLGIIKGLSSNILNELMILTQPGFLQQYSGGALRPNERDIRRAALIRERLHLEMNGKRQEDESI</sequence>
<keyword id="KW-0002">3D-structure</keyword>
<keyword id="KW-0021">Allosteric enzyme</keyword>
<keyword id="KW-0067">ATP-binding</keyword>
<keyword id="KW-0963">Cytoplasm</keyword>
<keyword id="KW-0418">Kinase</keyword>
<keyword id="KW-0547">Nucleotide-binding</keyword>
<keyword id="KW-0597">Phosphoprotein</keyword>
<keyword id="KW-1185">Reference proteome</keyword>
<keyword id="KW-0808">Transferase</keyword>
<comment type="function">
    <text evidence="3 4 5 6 7">Catalyzes the specific phosphorylation of arginine residues in a large number of proteins. Is part of the bacterial stress response system, where it is involved in regulating the global heat shock repressor CtsR; phosphorylates arginine residues in the winged helix-turn-helix domain of CtsR, thereby preventing its binding to DNA and consequently inducing the expression of repressed genes. The transcriptional repressor HrcA, the chaperone GroEL, the unfoldase ClpC, together with several ribosomal subunits, represent other physiological targets of McsB under stress conditions. Protein arginine phosphorylation has a physiologically important role and is involved in the regulation of many critical cellular processes, such as protein homeostasis, motility, competence, and stringent and stress responses, by regulating gene expression and protein activity. Functions as an adapter whose kinase activity is required for ClpCP-mediated degradation of CtsR during heat stress. Is required for the delocalization of competence proteins from the cell poles, probably via a role in the degradation of anchor proteins.</text>
</comment>
<comment type="catalytic activity">
    <reaction evidence="1 10">
        <text>L-arginyl-[protein] + ATP = N(omega)-phospho-L-arginyl-[protein] + ADP + H(+)</text>
        <dbReference type="Rhea" id="RHEA:43384"/>
        <dbReference type="Rhea" id="RHEA-COMP:10532"/>
        <dbReference type="Rhea" id="RHEA-COMP:10533"/>
        <dbReference type="ChEBI" id="CHEBI:15378"/>
        <dbReference type="ChEBI" id="CHEBI:29965"/>
        <dbReference type="ChEBI" id="CHEBI:30616"/>
        <dbReference type="ChEBI" id="CHEBI:83226"/>
        <dbReference type="ChEBI" id="CHEBI:456216"/>
        <dbReference type="EC" id="2.7.14.1"/>
    </reaction>
</comment>
<comment type="activity regulation">
    <text evidence="1 2 4 5 6">Appears to be allosterically activated by the binding of pArg-containing polypeptides to the pArg-binding pocket localized in the C-terminal domain of McsB (By similarity). The McsB kinase is inhibited in nonstressed cells by direct interaction with ClpC; upon heat exposure, the interaction of McsB with ClpC is dramatically decreased, leading to McsB release and activation during heat stress. Its kinase activity is counteracted by the protein-arginine-phosphatase YwlE in vivo. Requires McsA for full kinase activity.</text>
</comment>
<comment type="subunit">
    <text evidence="2 4">Interacts with CtsR in its autophosphorylated form. Interacts with McsA in nonstressed as well as in heat-stressed cells, whereas strongly interacts with ClpC only in nonstressed cells.</text>
</comment>
<comment type="subcellular location">
    <subcellularLocation>
        <location evidence="9">Cytoplasm</location>
    </subcellularLocation>
    <text evidence="3">Localizes to the cell poles in competent cells, but not in non-competent cells.</text>
</comment>
<comment type="induction">
    <text evidence="8">Is repressed by the transcriptional regulator CtsR. Forms part of an operon with ctsR, mcsA and clpC.</text>
</comment>
<comment type="PTM">
    <text evidence="4 6">Autophosphorylated on Arg residues. Phosphorylation on Arg-40 and Arg-86 are up-regulated upon stress conditions.</text>
</comment>
<comment type="disruption phenotype">
    <text evidence="3 7">Cells lacking this gene show a defect in the delocalization of competence proteins that is not related to altered expression of the com genes on the levels of either transcription or translation. Inactivation of mcsB also decreases transformability (PubMed:19226326). CtsR is no more degraded (PubMed:30962626).</text>
</comment>
<comment type="similarity">
    <text evidence="1">Belongs to the ATP:guanido phosphotransferase family.</text>
</comment>
<name>MCSB_BACSU</name>
<evidence type="ECO:0000255" key="1">
    <source>
        <dbReference type="HAMAP-Rule" id="MF_00602"/>
    </source>
</evidence>
<evidence type="ECO:0000269" key="2">
    <source>
    </source>
</evidence>
<evidence type="ECO:0000269" key="3">
    <source>
    </source>
</evidence>
<evidence type="ECO:0000269" key="4">
    <source>
    </source>
</evidence>
<evidence type="ECO:0000269" key="5">
    <source>
    </source>
</evidence>
<evidence type="ECO:0000269" key="6">
    <source>
    </source>
</evidence>
<evidence type="ECO:0000269" key="7">
    <source>
    </source>
</evidence>
<evidence type="ECO:0000269" key="8">
    <source>
    </source>
</evidence>
<evidence type="ECO:0000305" key="9"/>
<evidence type="ECO:0000305" key="10">
    <source>
    </source>
</evidence>
<evidence type="ECO:0007829" key="11">
    <source>
        <dbReference type="PDB" id="6TV6"/>
    </source>
</evidence>
<evidence type="ECO:0007829" key="12">
    <source>
        <dbReference type="PDB" id="8WTB"/>
    </source>
</evidence>